<accession>Q196U9</accession>
<dbReference type="EC" id="3.6.1.-"/>
<dbReference type="EMBL" id="DQ643392">
    <property type="protein sequence ID" value="ABF82141.1"/>
    <property type="molecule type" value="Genomic_DNA"/>
</dbReference>
<dbReference type="RefSeq" id="YP_654683.1">
    <property type="nucleotide sequence ID" value="NC_008187.1"/>
</dbReference>
<dbReference type="SMR" id="Q196U9"/>
<dbReference type="KEGG" id="vg:4156322"/>
<dbReference type="OrthoDB" id="17890at10239"/>
<dbReference type="Proteomes" id="UP000001358">
    <property type="component" value="Genome"/>
</dbReference>
<dbReference type="GO" id="GO:0016787">
    <property type="term" value="F:hydrolase activity"/>
    <property type="evidence" value="ECO:0007669"/>
    <property type="project" value="UniProtKB-KW"/>
</dbReference>
<dbReference type="GO" id="GO:0046872">
    <property type="term" value="F:metal ion binding"/>
    <property type="evidence" value="ECO:0007669"/>
    <property type="project" value="UniProtKB-KW"/>
</dbReference>
<dbReference type="Gene3D" id="3.90.79.10">
    <property type="entry name" value="Nucleoside Triphosphate Pyrophosphohydrolase"/>
    <property type="match status" value="1"/>
</dbReference>
<dbReference type="InterPro" id="IPR015797">
    <property type="entry name" value="NUDIX_hydrolase-like_dom_sf"/>
</dbReference>
<dbReference type="InterPro" id="IPR000086">
    <property type="entry name" value="NUDIX_hydrolase_dom"/>
</dbReference>
<dbReference type="Pfam" id="PF00293">
    <property type="entry name" value="NUDIX"/>
    <property type="match status" value="1"/>
</dbReference>
<dbReference type="SUPFAM" id="SSF55811">
    <property type="entry name" value="Nudix"/>
    <property type="match status" value="1"/>
</dbReference>
<dbReference type="PROSITE" id="PS51462">
    <property type="entry name" value="NUDIX"/>
    <property type="match status" value="1"/>
</dbReference>
<protein>
    <recommendedName>
        <fullName>Putative hydrolase 111R</fullName>
        <ecNumber>3.6.1.-</ecNumber>
    </recommendedName>
</protein>
<reference key="1">
    <citation type="journal article" date="2006" name="J. Virol.">
        <title>Genome of invertebrate iridescent virus type 3 (mosquito iridescent virus).</title>
        <authorList>
            <person name="Delhon G."/>
            <person name="Tulman E.R."/>
            <person name="Afonso C.L."/>
            <person name="Lu Z."/>
            <person name="Becnel J.J."/>
            <person name="Moser B.A."/>
            <person name="Kutish G.F."/>
            <person name="Rock D.L."/>
        </authorList>
    </citation>
    <scope>NUCLEOTIDE SEQUENCE [LARGE SCALE GENOMIC DNA]</scope>
</reference>
<organismHost>
    <name type="scientific">Aedes vexans</name>
    <name type="common">Inland floodwater mosquito</name>
    <name type="synonym">Culex vexans</name>
    <dbReference type="NCBI Taxonomy" id="7163"/>
</organismHost>
<organismHost>
    <name type="scientific">Culex territans</name>
    <dbReference type="NCBI Taxonomy" id="42431"/>
</organismHost>
<organismHost>
    <name type="scientific">Culiseta annulata</name>
    <dbReference type="NCBI Taxonomy" id="332058"/>
</organismHost>
<organismHost>
    <name type="scientific">Ochlerotatus sollicitans</name>
    <name type="common">eastern saltmarsh mosquito</name>
    <dbReference type="NCBI Taxonomy" id="310513"/>
</organismHost>
<organismHost>
    <name type="scientific">Ochlerotatus taeniorhynchus</name>
    <name type="common">Black salt marsh mosquito</name>
    <name type="synonym">Aedes taeniorhynchus</name>
    <dbReference type="NCBI Taxonomy" id="329105"/>
</organismHost>
<organismHost>
    <name type="scientific">Psorophora ferox</name>
    <dbReference type="NCBI Taxonomy" id="7183"/>
</organismHost>
<organism>
    <name type="scientific">Invertebrate iridescent virus 3</name>
    <name type="common">IIV-3</name>
    <name type="synonym">Mosquito iridescent virus</name>
    <dbReference type="NCBI Taxonomy" id="345201"/>
    <lineage>
        <taxon>Viruses</taxon>
        <taxon>Varidnaviria</taxon>
        <taxon>Bamfordvirae</taxon>
        <taxon>Nucleocytoviricota</taxon>
        <taxon>Megaviricetes</taxon>
        <taxon>Pimascovirales</taxon>
        <taxon>Iridoviridae</taxon>
        <taxon>Betairidovirinae</taxon>
        <taxon>Chloriridovirus</taxon>
    </lineage>
</organism>
<feature type="chain" id="PRO_0000376915" description="Putative hydrolase 111R">
    <location>
        <begin position="1"/>
        <end position="169"/>
    </location>
</feature>
<feature type="domain" description="Nudix hydrolase" evidence="2">
    <location>
        <begin position="46"/>
        <end position="169"/>
    </location>
</feature>
<feature type="short sequence motif" description="Nudix box">
    <location>
        <begin position="76"/>
        <end position="98"/>
    </location>
</feature>
<feature type="binding site" evidence="1">
    <location>
        <position position="92"/>
    </location>
    <ligand>
        <name>Mg(2+)</name>
        <dbReference type="ChEBI" id="CHEBI:18420"/>
    </ligand>
</feature>
<feature type="binding site" evidence="1">
    <location>
        <position position="96"/>
    </location>
    <ligand>
        <name>Mg(2+)</name>
        <dbReference type="ChEBI" id="CHEBI:18420"/>
    </ligand>
</feature>
<feature type="binding site" evidence="1">
    <location>
        <position position="138"/>
    </location>
    <ligand>
        <name>Mg(2+)</name>
        <dbReference type="ChEBI" id="CHEBI:18420"/>
    </ligand>
</feature>
<gene>
    <name type="ORF">IIV3-111R</name>
</gene>
<name>VF414_IIV3</name>
<keyword id="KW-0378">Hydrolase</keyword>
<keyword id="KW-0460">Magnesium</keyword>
<keyword id="KW-0464">Manganese</keyword>
<keyword id="KW-0479">Metal-binding</keyword>
<keyword id="KW-1185">Reference proteome</keyword>
<proteinExistence type="inferred from homology"/>
<comment type="cofactor">
    <cofactor evidence="3">
        <name>Mg(2+)</name>
        <dbReference type="ChEBI" id="CHEBI:18420"/>
    </cofactor>
    <cofactor evidence="3">
        <name>Mn(2+)</name>
        <dbReference type="ChEBI" id="CHEBI:29035"/>
    </cofactor>
</comment>
<comment type="similarity">
    <text evidence="3">Belongs to the Nudix hydrolase family.</text>
</comment>
<sequence length="169" mass="19304">MYFSTQIVNNKEKIMDTIFCNKGCCSLQTIKKKKPKVCDPNERYPFEKRKAGVFVECGSKFLLVQSYNDCWGIPKGHMEAYDHSPKTCAERELKEETGLEVKLTDAHLFRILLDNYYIYKISIPSVDQVDLSALPQLDSTGIGWVDMECAFDLNLTVLTQKILMALSCN</sequence>
<evidence type="ECO:0000250" key="1"/>
<evidence type="ECO:0000255" key="2">
    <source>
        <dbReference type="PROSITE-ProRule" id="PRU00794"/>
    </source>
</evidence>
<evidence type="ECO:0000305" key="3"/>